<dbReference type="EC" id="2.7.4.9" evidence="1"/>
<dbReference type="EMBL" id="FM204884">
    <property type="protein sequence ID" value="CAW98209.1"/>
    <property type="molecule type" value="Genomic_DNA"/>
</dbReference>
<dbReference type="SMR" id="C0MGT8"/>
<dbReference type="KEGG" id="seq:SZO_03610"/>
<dbReference type="eggNOG" id="COG0125">
    <property type="taxonomic scope" value="Bacteria"/>
</dbReference>
<dbReference type="HOGENOM" id="CLU_049131_0_2_9"/>
<dbReference type="Proteomes" id="UP000001368">
    <property type="component" value="Chromosome"/>
</dbReference>
<dbReference type="GO" id="GO:0005829">
    <property type="term" value="C:cytosol"/>
    <property type="evidence" value="ECO:0007669"/>
    <property type="project" value="TreeGrafter"/>
</dbReference>
<dbReference type="GO" id="GO:0005524">
    <property type="term" value="F:ATP binding"/>
    <property type="evidence" value="ECO:0007669"/>
    <property type="project" value="UniProtKB-UniRule"/>
</dbReference>
<dbReference type="GO" id="GO:0004798">
    <property type="term" value="F:dTMP kinase activity"/>
    <property type="evidence" value="ECO:0007669"/>
    <property type="project" value="UniProtKB-UniRule"/>
</dbReference>
<dbReference type="GO" id="GO:0006233">
    <property type="term" value="P:dTDP biosynthetic process"/>
    <property type="evidence" value="ECO:0007669"/>
    <property type="project" value="InterPro"/>
</dbReference>
<dbReference type="GO" id="GO:0006235">
    <property type="term" value="P:dTTP biosynthetic process"/>
    <property type="evidence" value="ECO:0007669"/>
    <property type="project" value="UniProtKB-UniRule"/>
</dbReference>
<dbReference type="GO" id="GO:0006227">
    <property type="term" value="P:dUDP biosynthetic process"/>
    <property type="evidence" value="ECO:0007669"/>
    <property type="project" value="TreeGrafter"/>
</dbReference>
<dbReference type="CDD" id="cd01672">
    <property type="entry name" value="TMPK"/>
    <property type="match status" value="1"/>
</dbReference>
<dbReference type="FunFam" id="3.40.50.300:FF:000225">
    <property type="entry name" value="Thymidylate kinase"/>
    <property type="match status" value="1"/>
</dbReference>
<dbReference type="Gene3D" id="3.40.50.300">
    <property type="entry name" value="P-loop containing nucleotide triphosphate hydrolases"/>
    <property type="match status" value="1"/>
</dbReference>
<dbReference type="HAMAP" id="MF_00165">
    <property type="entry name" value="Thymidylate_kinase"/>
    <property type="match status" value="1"/>
</dbReference>
<dbReference type="InterPro" id="IPR027417">
    <property type="entry name" value="P-loop_NTPase"/>
</dbReference>
<dbReference type="InterPro" id="IPR039430">
    <property type="entry name" value="Thymidylate_kin-like_dom"/>
</dbReference>
<dbReference type="InterPro" id="IPR018095">
    <property type="entry name" value="Thymidylate_kin_CS"/>
</dbReference>
<dbReference type="InterPro" id="IPR018094">
    <property type="entry name" value="Thymidylate_kinase"/>
</dbReference>
<dbReference type="NCBIfam" id="TIGR00041">
    <property type="entry name" value="DTMP_kinase"/>
    <property type="match status" value="1"/>
</dbReference>
<dbReference type="PANTHER" id="PTHR10344">
    <property type="entry name" value="THYMIDYLATE KINASE"/>
    <property type="match status" value="1"/>
</dbReference>
<dbReference type="PANTHER" id="PTHR10344:SF4">
    <property type="entry name" value="UMP-CMP KINASE 2, MITOCHONDRIAL"/>
    <property type="match status" value="1"/>
</dbReference>
<dbReference type="Pfam" id="PF02223">
    <property type="entry name" value="Thymidylate_kin"/>
    <property type="match status" value="1"/>
</dbReference>
<dbReference type="SUPFAM" id="SSF52540">
    <property type="entry name" value="P-loop containing nucleoside triphosphate hydrolases"/>
    <property type="match status" value="1"/>
</dbReference>
<dbReference type="PROSITE" id="PS01331">
    <property type="entry name" value="THYMIDYLATE_KINASE"/>
    <property type="match status" value="1"/>
</dbReference>
<reference key="1">
    <citation type="journal article" date="2009" name="PLoS Pathog.">
        <title>Genomic evidence for the evolution of Streptococcus equi: host restriction, increased virulence, and genetic exchange with human pathogens.</title>
        <authorList>
            <person name="Holden M.T.G."/>
            <person name="Heather Z."/>
            <person name="Paillot R."/>
            <person name="Steward K.F."/>
            <person name="Webb K."/>
            <person name="Ainslie F."/>
            <person name="Jourdan T."/>
            <person name="Bason N.C."/>
            <person name="Holroyd N.E."/>
            <person name="Mungall K."/>
            <person name="Quail M.A."/>
            <person name="Sanders M."/>
            <person name="Simmonds M."/>
            <person name="Willey D."/>
            <person name="Brooks K."/>
            <person name="Aanensen D.M."/>
            <person name="Spratt B.G."/>
            <person name="Jolley K.A."/>
            <person name="Maiden M.C.J."/>
            <person name="Kehoe M."/>
            <person name="Chanter N."/>
            <person name="Bentley S.D."/>
            <person name="Robinson C."/>
            <person name="Maskell D.J."/>
            <person name="Parkhill J."/>
            <person name="Waller A.S."/>
        </authorList>
    </citation>
    <scope>NUCLEOTIDE SEQUENCE [LARGE SCALE GENOMIC DNA]</scope>
    <source>
        <strain>H70</strain>
    </source>
</reference>
<accession>C0MGT8</accession>
<name>KTHY_STRS7</name>
<keyword id="KW-0067">ATP-binding</keyword>
<keyword id="KW-0418">Kinase</keyword>
<keyword id="KW-0545">Nucleotide biosynthesis</keyword>
<keyword id="KW-0547">Nucleotide-binding</keyword>
<keyword id="KW-0808">Transferase</keyword>
<organism>
    <name type="scientific">Streptococcus equi subsp. zooepidemicus (strain H70)</name>
    <dbReference type="NCBI Taxonomy" id="553483"/>
    <lineage>
        <taxon>Bacteria</taxon>
        <taxon>Bacillati</taxon>
        <taxon>Bacillota</taxon>
        <taxon>Bacilli</taxon>
        <taxon>Lactobacillales</taxon>
        <taxon>Streptococcaceae</taxon>
        <taxon>Streptococcus</taxon>
    </lineage>
</organism>
<gene>
    <name evidence="1" type="primary">tmk</name>
    <name type="ordered locus">SZO_03610</name>
</gene>
<protein>
    <recommendedName>
        <fullName evidence="1">Thymidylate kinase</fullName>
        <ecNumber evidence="1">2.7.4.9</ecNumber>
    </recommendedName>
    <alternativeName>
        <fullName evidence="1">dTMP kinase</fullName>
    </alternativeName>
</protein>
<evidence type="ECO:0000255" key="1">
    <source>
        <dbReference type="HAMAP-Rule" id="MF_00165"/>
    </source>
</evidence>
<proteinExistence type="inferred from homology"/>
<comment type="function">
    <text evidence="1">Phosphorylation of dTMP to form dTDP in both de novo and salvage pathways of dTTP synthesis.</text>
</comment>
<comment type="catalytic activity">
    <reaction evidence="1">
        <text>dTMP + ATP = dTDP + ADP</text>
        <dbReference type="Rhea" id="RHEA:13517"/>
        <dbReference type="ChEBI" id="CHEBI:30616"/>
        <dbReference type="ChEBI" id="CHEBI:58369"/>
        <dbReference type="ChEBI" id="CHEBI:63528"/>
        <dbReference type="ChEBI" id="CHEBI:456216"/>
        <dbReference type="EC" id="2.7.4.9"/>
    </reaction>
</comment>
<comment type="similarity">
    <text evidence="1">Belongs to the thymidylate kinase family.</text>
</comment>
<feature type="chain" id="PRO_1000203628" description="Thymidylate kinase">
    <location>
        <begin position="1"/>
        <end position="211"/>
    </location>
</feature>
<feature type="binding site" evidence="1">
    <location>
        <begin position="11"/>
        <end position="18"/>
    </location>
    <ligand>
        <name>ATP</name>
        <dbReference type="ChEBI" id="CHEBI:30616"/>
    </ligand>
</feature>
<sequence length="211" mass="23234">MTRGKLITFEGPDGAGKTTVLERLVPLLQAALGQTIVTTREPGGVAIAEKIRQLILDVSHTTMDDKTELLLYIAARRQHLVEKIMPALEAGHLVLVDRFIDSSVAYQGAGRGLDKQAIQWLNHFATDGVDPDLTLYFDVPSELGLARIAQNTEREVNRLDLEQLDLHQRVRKGYLELALENPQRIVKIDASQDLESVVAAALAAIITHSQA</sequence>